<keyword id="KW-0066">ATP synthesis</keyword>
<keyword id="KW-0997">Cell inner membrane</keyword>
<keyword id="KW-1003">Cell membrane</keyword>
<keyword id="KW-0138">CF(0)</keyword>
<keyword id="KW-0375">Hydrogen ion transport</keyword>
<keyword id="KW-0406">Ion transport</keyword>
<keyword id="KW-0472">Membrane</keyword>
<keyword id="KW-0812">Transmembrane</keyword>
<keyword id="KW-1133">Transmembrane helix</keyword>
<keyword id="KW-0813">Transport</keyword>
<feature type="chain" id="PRO_0000368337" description="ATP synthase subunit b">
    <location>
        <begin position="1"/>
        <end position="165"/>
    </location>
</feature>
<feature type="transmembrane region" description="Helical" evidence="1">
    <location>
        <begin position="10"/>
        <end position="30"/>
    </location>
</feature>
<organism>
    <name type="scientific">Bacteroides fragilis (strain YCH46)</name>
    <dbReference type="NCBI Taxonomy" id="295405"/>
    <lineage>
        <taxon>Bacteria</taxon>
        <taxon>Pseudomonadati</taxon>
        <taxon>Bacteroidota</taxon>
        <taxon>Bacteroidia</taxon>
        <taxon>Bacteroidales</taxon>
        <taxon>Bacteroidaceae</taxon>
        <taxon>Bacteroides</taxon>
    </lineage>
</organism>
<comment type="function">
    <text evidence="1">F(1)F(0) ATP synthase produces ATP from ADP in the presence of a proton or sodium gradient. F-type ATPases consist of two structural domains, F(1) containing the extramembraneous catalytic core and F(0) containing the membrane proton channel, linked together by a central stalk and a peripheral stalk. During catalysis, ATP synthesis in the catalytic domain of F(1) is coupled via a rotary mechanism of the central stalk subunits to proton translocation.</text>
</comment>
<comment type="function">
    <text evidence="1">Component of the F(0) channel, it forms part of the peripheral stalk, linking F(1) to F(0).</text>
</comment>
<comment type="subunit">
    <text evidence="1">F-type ATPases have 2 components, F(1) - the catalytic core - and F(0) - the membrane proton channel. F(1) has five subunits: alpha(3), beta(3), gamma(1), delta(1), epsilon(1). F(0) has three main subunits: a(1), b(2) and c(10-14). The alpha and beta chains form an alternating ring which encloses part of the gamma chain. F(1) is attached to F(0) by a central stalk formed by the gamma and epsilon chains, while a peripheral stalk is formed by the delta and b chains.</text>
</comment>
<comment type="subcellular location">
    <subcellularLocation>
        <location evidence="1">Cell inner membrane</location>
        <topology evidence="1">Single-pass membrane protein</topology>
    </subcellularLocation>
</comment>
<comment type="similarity">
    <text evidence="1">Belongs to the ATPase B chain family.</text>
</comment>
<dbReference type="EMBL" id="AP006841">
    <property type="protein sequence ID" value="BAD48923.1"/>
    <property type="molecule type" value="Genomic_DNA"/>
</dbReference>
<dbReference type="RefSeq" id="WP_005787487.1">
    <property type="nucleotide sequence ID" value="NZ_UYXF01000015.1"/>
</dbReference>
<dbReference type="RefSeq" id="YP_099457.1">
    <property type="nucleotide sequence ID" value="NC_006347.1"/>
</dbReference>
<dbReference type="SMR" id="Q64UA6"/>
<dbReference type="STRING" id="295405.BF2176"/>
<dbReference type="GeneID" id="60367666"/>
<dbReference type="KEGG" id="bfr:BF2176"/>
<dbReference type="PATRIC" id="fig|295405.11.peg.2113"/>
<dbReference type="HOGENOM" id="CLU_079215_4_1_10"/>
<dbReference type="OrthoDB" id="9795289at2"/>
<dbReference type="Proteomes" id="UP000002197">
    <property type="component" value="Chromosome"/>
</dbReference>
<dbReference type="GO" id="GO:0005886">
    <property type="term" value="C:plasma membrane"/>
    <property type="evidence" value="ECO:0007669"/>
    <property type="project" value="UniProtKB-SubCell"/>
</dbReference>
<dbReference type="GO" id="GO:0045259">
    <property type="term" value="C:proton-transporting ATP synthase complex"/>
    <property type="evidence" value="ECO:0007669"/>
    <property type="project" value="UniProtKB-KW"/>
</dbReference>
<dbReference type="GO" id="GO:0046933">
    <property type="term" value="F:proton-transporting ATP synthase activity, rotational mechanism"/>
    <property type="evidence" value="ECO:0007669"/>
    <property type="project" value="UniProtKB-UniRule"/>
</dbReference>
<dbReference type="GO" id="GO:0046961">
    <property type="term" value="F:proton-transporting ATPase activity, rotational mechanism"/>
    <property type="evidence" value="ECO:0007669"/>
    <property type="project" value="TreeGrafter"/>
</dbReference>
<dbReference type="CDD" id="cd06503">
    <property type="entry name" value="ATP-synt_Fo_b"/>
    <property type="match status" value="1"/>
</dbReference>
<dbReference type="HAMAP" id="MF_01398">
    <property type="entry name" value="ATP_synth_b_bprime"/>
    <property type="match status" value="1"/>
</dbReference>
<dbReference type="InterPro" id="IPR002146">
    <property type="entry name" value="ATP_synth_b/b'su_bac/chlpt"/>
</dbReference>
<dbReference type="InterPro" id="IPR005864">
    <property type="entry name" value="ATP_synth_F0_bsu_bac"/>
</dbReference>
<dbReference type="InterPro" id="IPR050059">
    <property type="entry name" value="ATP_synthase_B_chain"/>
</dbReference>
<dbReference type="NCBIfam" id="TIGR01144">
    <property type="entry name" value="ATP_synt_b"/>
    <property type="match status" value="1"/>
</dbReference>
<dbReference type="PANTHER" id="PTHR33445:SF1">
    <property type="entry name" value="ATP SYNTHASE SUBUNIT B"/>
    <property type="match status" value="1"/>
</dbReference>
<dbReference type="PANTHER" id="PTHR33445">
    <property type="entry name" value="ATP SYNTHASE SUBUNIT B', CHLOROPLASTIC"/>
    <property type="match status" value="1"/>
</dbReference>
<dbReference type="Pfam" id="PF00430">
    <property type="entry name" value="ATP-synt_B"/>
    <property type="match status" value="1"/>
</dbReference>
<proteinExistence type="inferred from homology"/>
<name>ATPF_BACFR</name>
<reference key="1">
    <citation type="journal article" date="2004" name="Proc. Natl. Acad. Sci. U.S.A.">
        <title>Genomic analysis of Bacteroides fragilis reveals extensive DNA inversions regulating cell surface adaptation.</title>
        <authorList>
            <person name="Kuwahara T."/>
            <person name="Yamashita A."/>
            <person name="Hirakawa H."/>
            <person name="Nakayama H."/>
            <person name="Toh H."/>
            <person name="Okada N."/>
            <person name="Kuhara S."/>
            <person name="Hattori M."/>
            <person name="Hayashi T."/>
            <person name="Ohnishi Y."/>
        </authorList>
    </citation>
    <scope>NUCLEOTIDE SEQUENCE [LARGE SCALE GENOMIC DNA]</scope>
    <source>
        <strain>YCH46</strain>
    </source>
</reference>
<sequence length="165" mass="18951">MSLLLPDSGLIFWMLLSFGIVFAVLAKYGFPVIIKMVEGRKTYIDESLEVAREANAQLSRLKEEGEAIVAAANKEQGRIMKEAMQEREKIIYEARKQAEIAAQKELDEVKRQIQIEKDEAIRDIRRQVALLSVDIAEKVIRKNLDDKQEQMGMIDRMLDEVLTKN</sequence>
<protein>
    <recommendedName>
        <fullName evidence="1">ATP synthase subunit b</fullName>
    </recommendedName>
    <alternativeName>
        <fullName evidence="1">ATP synthase F(0) sector subunit b</fullName>
    </alternativeName>
    <alternativeName>
        <fullName evidence="1">ATPase subunit I</fullName>
    </alternativeName>
    <alternativeName>
        <fullName evidence="1">F-type ATPase subunit b</fullName>
        <shortName evidence="1">F-ATPase subunit b</shortName>
    </alternativeName>
</protein>
<gene>
    <name evidence="1" type="primary">atpF</name>
    <name type="ordered locus">BF2176</name>
</gene>
<accession>Q64UA6</accession>
<evidence type="ECO:0000255" key="1">
    <source>
        <dbReference type="HAMAP-Rule" id="MF_01398"/>
    </source>
</evidence>